<reference key="1">
    <citation type="journal article" date="2003" name="DNA Res.">
        <title>Complete genome structure of Gloeobacter violaceus PCC 7421, a cyanobacterium that lacks thylakoids.</title>
        <authorList>
            <person name="Nakamura Y."/>
            <person name="Kaneko T."/>
            <person name="Sato S."/>
            <person name="Mimuro M."/>
            <person name="Miyashita H."/>
            <person name="Tsuchiya T."/>
            <person name="Sasamoto S."/>
            <person name="Watanabe A."/>
            <person name="Kawashima K."/>
            <person name="Kishida Y."/>
            <person name="Kiyokawa C."/>
            <person name="Kohara M."/>
            <person name="Matsumoto M."/>
            <person name="Matsuno A."/>
            <person name="Nakazaki N."/>
            <person name="Shimpo S."/>
            <person name="Takeuchi C."/>
            <person name="Yamada M."/>
            <person name="Tabata S."/>
        </authorList>
    </citation>
    <scope>NUCLEOTIDE SEQUENCE [LARGE SCALE GENOMIC DNA]</scope>
    <source>
        <strain>ATCC 29082 / PCC 7421</strain>
    </source>
</reference>
<feature type="chain" id="PRO_0000318361" description="Protein translocase subunit SecA">
    <location>
        <begin position="1"/>
        <end position="952"/>
    </location>
</feature>
<feature type="binding site" evidence="1">
    <location>
        <position position="104"/>
    </location>
    <ligand>
        <name>ATP</name>
        <dbReference type="ChEBI" id="CHEBI:30616"/>
    </ligand>
</feature>
<feature type="binding site" evidence="1">
    <location>
        <begin position="122"/>
        <end position="126"/>
    </location>
    <ligand>
        <name>ATP</name>
        <dbReference type="ChEBI" id="CHEBI:30616"/>
    </ligand>
</feature>
<feature type="binding site" evidence="1">
    <location>
        <position position="512"/>
    </location>
    <ligand>
        <name>ATP</name>
        <dbReference type="ChEBI" id="CHEBI:30616"/>
    </ligand>
</feature>
<accession>Q7NJJ6</accession>
<protein>
    <recommendedName>
        <fullName evidence="1">Protein translocase subunit SecA</fullName>
        <ecNumber evidence="1">7.4.2.8</ecNumber>
    </recommendedName>
</protein>
<evidence type="ECO:0000255" key="1">
    <source>
        <dbReference type="HAMAP-Rule" id="MF_01382"/>
    </source>
</evidence>
<name>SECA_GLOVI</name>
<sequence length="952" mass="107740">MAWWNKLFGDPQERKVKKYQPRVAEMNALEAEVAALSDDQLRAKTAVFQKRVADQLQGVDLDALEIRERRRRIDVALDGVISEAFAVVREAAKRVIGLRHYDVQLIGGLVLHEGQIAEMKTGEGKTLVATLPAYLNALTGRGVHIVTVNDYLARRDSEWMGQVHRFLGLSVGLIQQSMTPSERAQNYAADITYGTNSELGFDYLRDNMATNAGELVQRSFNYCIIDEVDSILVDEARTPLIISGMVAKPAEKYMRANEVATALERNTHYEVDEKQRNVTLTDEGFIAAEQMLSTEDLFSPRDPWAHFVFNAVKAKELFNKDVQYIVRNDEVVIVDEFTGRVMPGRRWSEGLHQAVEAKEMVTIQNETQTMASITYQNFFLLYPKLAGMTGTALTEEAEFGKIYSLEVTAIPTNRKVVRTDMSDQVYKTENGKWQSVAAEIAEMNKNGRPVLVGTTSVEKSEVLSALLKEKGIAHNLLNAKPENVERESEIVAQAGRKGGVTIATNMAGRGTDILLGGNPEYMARLKLKEVLFPALVIDDEDAFSPMMRLLNNGNSRGTGFAATSKKKALPKAEIFPCELSESTKQQLKAAVDYAVAMLGADSQPALQVEELIAVASEKGPTDDPVIQHLREIYRAIYKEYQVVTDREHDEVVKLGGLHVIGTERHEARRVDNQLRGRSGRQGDPGSTRFFLSLGDNLLRIFGGERVAGLMEAFKVEEDMPIESGLLTKSLENAQRKVETFYYDQRKQVFEYDEVMNNQRKAIYAERRRALEGQDLSAVVREYIDQTVDEIVRAHVNAERPPEEWELPALIQDLQQLIPLLENQLDAVKLGEFSAVELEEDLKSQALLAYETREEYINAIQPDLMREAERYFILNQIDTLWREHLQQMDSLREMIGLRGYGQKDPLIEYKNEGYELFLQMLVEVRRNVVFALYHFQPQYNPPIDPDYVDSEYV</sequence>
<proteinExistence type="inferred from homology"/>
<comment type="function">
    <text evidence="1">Part of the Sec protein translocase complex. Interacts with the SecYEG preprotein conducting channel. Has a central role in coupling the hydrolysis of ATP to the transfer of proteins into and across the cell membrane, serving as an ATP-driven molecular motor driving the stepwise translocation of polypeptide chains across the membrane.</text>
</comment>
<comment type="catalytic activity">
    <reaction evidence="1">
        <text>ATP + H2O + cellular proteinSide 1 = ADP + phosphate + cellular proteinSide 2.</text>
        <dbReference type="EC" id="7.4.2.8"/>
    </reaction>
</comment>
<comment type="subunit">
    <text evidence="1">Monomer and homodimer. Part of the essential Sec protein translocation apparatus which comprises SecA, SecYEG and auxiliary proteins SecDF. Other proteins may also be involved.</text>
</comment>
<comment type="subcellular location">
    <subcellularLocation>
        <location evidence="1">Cell inner membrane</location>
        <topology evidence="1">Peripheral membrane protein</topology>
        <orientation evidence="1">Cytoplasmic side</orientation>
    </subcellularLocation>
    <subcellularLocation>
        <location evidence="1">Cytoplasm</location>
    </subcellularLocation>
    <text evidence="1">Distribution is 50-50.</text>
</comment>
<comment type="similarity">
    <text evidence="1">Belongs to the SecA family.</text>
</comment>
<keyword id="KW-0067">ATP-binding</keyword>
<keyword id="KW-0997">Cell inner membrane</keyword>
<keyword id="KW-1003">Cell membrane</keyword>
<keyword id="KW-0963">Cytoplasm</keyword>
<keyword id="KW-0472">Membrane</keyword>
<keyword id="KW-0547">Nucleotide-binding</keyword>
<keyword id="KW-0653">Protein transport</keyword>
<keyword id="KW-1185">Reference proteome</keyword>
<keyword id="KW-1278">Translocase</keyword>
<keyword id="KW-0811">Translocation</keyword>
<keyword id="KW-0813">Transport</keyword>
<organism>
    <name type="scientific">Gloeobacter violaceus (strain ATCC 29082 / PCC 7421)</name>
    <dbReference type="NCBI Taxonomy" id="251221"/>
    <lineage>
        <taxon>Bacteria</taxon>
        <taxon>Bacillati</taxon>
        <taxon>Cyanobacteriota</taxon>
        <taxon>Cyanophyceae</taxon>
        <taxon>Gloeobacterales</taxon>
        <taxon>Gloeobacteraceae</taxon>
        <taxon>Gloeobacter</taxon>
    </lineage>
</organism>
<gene>
    <name evidence="1" type="primary">secA</name>
    <name type="ordered locus">gll1836</name>
</gene>
<dbReference type="EC" id="7.4.2.8" evidence="1"/>
<dbReference type="EMBL" id="BA000045">
    <property type="protein sequence ID" value="BAC89777.1"/>
    <property type="molecule type" value="Genomic_DNA"/>
</dbReference>
<dbReference type="RefSeq" id="NP_924782.1">
    <property type="nucleotide sequence ID" value="NC_005125.1"/>
</dbReference>
<dbReference type="RefSeq" id="WP_011141834.1">
    <property type="nucleotide sequence ID" value="NC_005125.1"/>
</dbReference>
<dbReference type="SMR" id="Q7NJJ6"/>
<dbReference type="FunCoup" id="Q7NJJ6">
    <property type="interactions" value="263"/>
</dbReference>
<dbReference type="STRING" id="251221.gene:10759328"/>
<dbReference type="EnsemblBacteria" id="BAC89777">
    <property type="protein sequence ID" value="BAC89777"/>
    <property type="gene ID" value="BAC89777"/>
</dbReference>
<dbReference type="KEGG" id="gvi:gll1836"/>
<dbReference type="PATRIC" id="fig|251221.4.peg.1867"/>
<dbReference type="eggNOG" id="COG0653">
    <property type="taxonomic scope" value="Bacteria"/>
</dbReference>
<dbReference type="HOGENOM" id="CLU_005314_3_0_3"/>
<dbReference type="InParanoid" id="Q7NJJ6"/>
<dbReference type="OrthoDB" id="9805579at2"/>
<dbReference type="PhylomeDB" id="Q7NJJ6"/>
<dbReference type="Proteomes" id="UP000000557">
    <property type="component" value="Chromosome"/>
</dbReference>
<dbReference type="GO" id="GO:0031522">
    <property type="term" value="C:cell envelope Sec protein transport complex"/>
    <property type="evidence" value="ECO:0000318"/>
    <property type="project" value="GO_Central"/>
</dbReference>
<dbReference type="GO" id="GO:0005737">
    <property type="term" value="C:cytoplasm"/>
    <property type="evidence" value="ECO:0007669"/>
    <property type="project" value="UniProtKB-SubCell"/>
</dbReference>
<dbReference type="GO" id="GO:0005886">
    <property type="term" value="C:plasma membrane"/>
    <property type="evidence" value="ECO:0000318"/>
    <property type="project" value="GO_Central"/>
</dbReference>
<dbReference type="GO" id="GO:0005524">
    <property type="term" value="F:ATP binding"/>
    <property type="evidence" value="ECO:0000318"/>
    <property type="project" value="GO_Central"/>
</dbReference>
<dbReference type="GO" id="GO:0008564">
    <property type="term" value="F:protein-exporting ATPase activity"/>
    <property type="evidence" value="ECO:0007669"/>
    <property type="project" value="UniProtKB-EC"/>
</dbReference>
<dbReference type="GO" id="GO:0065002">
    <property type="term" value="P:intracellular protein transmembrane transport"/>
    <property type="evidence" value="ECO:0007669"/>
    <property type="project" value="UniProtKB-UniRule"/>
</dbReference>
<dbReference type="GO" id="GO:0017038">
    <property type="term" value="P:protein import"/>
    <property type="evidence" value="ECO:0007669"/>
    <property type="project" value="InterPro"/>
</dbReference>
<dbReference type="GO" id="GO:0006605">
    <property type="term" value="P:protein targeting"/>
    <property type="evidence" value="ECO:0007669"/>
    <property type="project" value="UniProtKB-UniRule"/>
</dbReference>
<dbReference type="GO" id="GO:0043952">
    <property type="term" value="P:protein transport by the Sec complex"/>
    <property type="evidence" value="ECO:0000318"/>
    <property type="project" value="GO_Central"/>
</dbReference>
<dbReference type="CDD" id="cd17928">
    <property type="entry name" value="DEXDc_SecA"/>
    <property type="match status" value="1"/>
</dbReference>
<dbReference type="CDD" id="cd18803">
    <property type="entry name" value="SF2_C_secA"/>
    <property type="match status" value="1"/>
</dbReference>
<dbReference type="FunFam" id="3.90.1440.10:FF:000003">
    <property type="entry name" value="Preprotein translocase SecA subunit"/>
    <property type="match status" value="1"/>
</dbReference>
<dbReference type="FunFam" id="1.10.3060.10:FF:000003">
    <property type="entry name" value="Protein translocase subunit SecA"/>
    <property type="match status" value="1"/>
</dbReference>
<dbReference type="FunFam" id="3.40.50.300:FF:000334">
    <property type="entry name" value="Protein translocase subunit SecA"/>
    <property type="match status" value="1"/>
</dbReference>
<dbReference type="Gene3D" id="1.10.3060.10">
    <property type="entry name" value="Helical scaffold and wing domains of SecA"/>
    <property type="match status" value="1"/>
</dbReference>
<dbReference type="Gene3D" id="3.40.50.300">
    <property type="entry name" value="P-loop containing nucleotide triphosphate hydrolases"/>
    <property type="match status" value="2"/>
</dbReference>
<dbReference type="Gene3D" id="3.90.1440.10">
    <property type="entry name" value="SecA, preprotein cross-linking domain"/>
    <property type="match status" value="1"/>
</dbReference>
<dbReference type="HAMAP" id="MF_01382">
    <property type="entry name" value="SecA"/>
    <property type="match status" value="1"/>
</dbReference>
<dbReference type="InterPro" id="IPR014001">
    <property type="entry name" value="Helicase_ATP-bd"/>
</dbReference>
<dbReference type="InterPro" id="IPR027417">
    <property type="entry name" value="P-loop_NTPase"/>
</dbReference>
<dbReference type="InterPro" id="IPR000185">
    <property type="entry name" value="SecA"/>
</dbReference>
<dbReference type="InterPro" id="IPR020937">
    <property type="entry name" value="SecA_CS"/>
</dbReference>
<dbReference type="InterPro" id="IPR011115">
    <property type="entry name" value="SecA_DEAD"/>
</dbReference>
<dbReference type="InterPro" id="IPR014018">
    <property type="entry name" value="SecA_motor_DEAD"/>
</dbReference>
<dbReference type="InterPro" id="IPR011130">
    <property type="entry name" value="SecA_preprotein_X-link_dom"/>
</dbReference>
<dbReference type="InterPro" id="IPR044722">
    <property type="entry name" value="SecA_SF2_C"/>
</dbReference>
<dbReference type="InterPro" id="IPR011116">
    <property type="entry name" value="SecA_Wing/Scaffold"/>
</dbReference>
<dbReference type="InterPro" id="IPR036266">
    <property type="entry name" value="SecA_Wing/Scaffold_sf"/>
</dbReference>
<dbReference type="InterPro" id="IPR036670">
    <property type="entry name" value="SecA_X-link_sf"/>
</dbReference>
<dbReference type="NCBIfam" id="TIGR00963">
    <property type="entry name" value="secA"/>
    <property type="match status" value="1"/>
</dbReference>
<dbReference type="PANTHER" id="PTHR30612:SF0">
    <property type="entry name" value="CHLOROPLAST PROTEIN-TRANSPORTING ATPASE"/>
    <property type="match status" value="1"/>
</dbReference>
<dbReference type="PANTHER" id="PTHR30612">
    <property type="entry name" value="SECA INNER MEMBRANE COMPONENT OF SEC PROTEIN SECRETION SYSTEM"/>
    <property type="match status" value="1"/>
</dbReference>
<dbReference type="Pfam" id="PF21090">
    <property type="entry name" value="P-loop_SecA"/>
    <property type="match status" value="1"/>
</dbReference>
<dbReference type="Pfam" id="PF07517">
    <property type="entry name" value="SecA_DEAD"/>
    <property type="match status" value="1"/>
</dbReference>
<dbReference type="Pfam" id="PF01043">
    <property type="entry name" value="SecA_PP_bind"/>
    <property type="match status" value="1"/>
</dbReference>
<dbReference type="Pfam" id="PF07516">
    <property type="entry name" value="SecA_SW"/>
    <property type="match status" value="1"/>
</dbReference>
<dbReference type="PRINTS" id="PR00906">
    <property type="entry name" value="SECA"/>
</dbReference>
<dbReference type="SMART" id="SM00957">
    <property type="entry name" value="SecA_DEAD"/>
    <property type="match status" value="1"/>
</dbReference>
<dbReference type="SMART" id="SM00958">
    <property type="entry name" value="SecA_PP_bind"/>
    <property type="match status" value="1"/>
</dbReference>
<dbReference type="SUPFAM" id="SSF81886">
    <property type="entry name" value="Helical scaffold and wing domains of SecA"/>
    <property type="match status" value="1"/>
</dbReference>
<dbReference type="SUPFAM" id="SSF52540">
    <property type="entry name" value="P-loop containing nucleoside triphosphate hydrolases"/>
    <property type="match status" value="2"/>
</dbReference>
<dbReference type="SUPFAM" id="SSF81767">
    <property type="entry name" value="Pre-protein crosslinking domain of SecA"/>
    <property type="match status" value="1"/>
</dbReference>
<dbReference type="PROSITE" id="PS01312">
    <property type="entry name" value="SECA"/>
    <property type="match status" value="1"/>
</dbReference>
<dbReference type="PROSITE" id="PS51196">
    <property type="entry name" value="SECA_MOTOR_DEAD"/>
    <property type="match status" value="1"/>
</dbReference>